<reference key="1">
    <citation type="journal article" date="1985" name="Nature">
        <title>Primary structure of the precursor to the three major surface antigens of Plasmodium falciparum merozoites.</title>
        <authorList>
            <person name="Holder A.A."/>
            <person name="Lockyer M.J."/>
            <person name="Odink K.G."/>
            <person name="Sandhu J.S."/>
            <person name="Riveros-Moreno V."/>
            <person name="Nicholls S.C."/>
            <person name="Hillman Y."/>
            <person name="Davey L.S."/>
            <person name="Tizard M.L.V."/>
            <person name="Schwarz R.T."/>
            <person name="Freeman R.R."/>
        </authorList>
    </citation>
    <scope>NUCLEOTIDE SEQUENCE [MRNA]</scope>
    <scope>SUBCELLULAR LOCATION</scope>
    <scope>DEVELOPMENTAL STAGE</scope>
    <scope>PROTEOLYTIC CLEAVAGE</scope>
</reference>
<reference key="2">
    <citation type="submission" date="1991-03" db="EMBL/GenBank/DDBJ databases">
        <authorList>
            <person name="Holder A.A."/>
        </authorList>
    </citation>
    <scope>SEQUENCE REVISION</scope>
</reference>
<reference key="3">
    <citation type="journal article" date="2000" name="Mol. Biochem. Parasitol.">
        <title>Identification of a novel antigenic domain of Plasmodium falciparum merozoite surface protein-1 that specifically binds to human erythrocytes and inhibits parasite invasion, in vitro.</title>
        <authorList>
            <person name="Nikodem D."/>
            <person name="Davidson E."/>
        </authorList>
    </citation>
    <scope>FUNCTION</scope>
    <scope>BIOTECHNOLOGY</scope>
</reference>
<reference key="4">
    <citation type="journal article" date="2010" name="Mol. Microbiol.">
        <title>Regulated maturation of malaria merozoite surface protein-1 is essential for parasite growth.</title>
        <authorList>
            <person name="Child M.A."/>
            <person name="Epp C."/>
            <person name="Bujard H."/>
            <person name="Blackman M.J."/>
        </authorList>
    </citation>
    <scope>SUBCELLULAR LOCATION</scope>
    <scope>DEVELOPMENTAL STAGE</scope>
    <scope>PROTEOLYTIC CLEAVAGE</scope>
    <scope>POLYMORPHISM</scope>
    <source>
        <strain evidence="13">T9/94</strain>
    </source>
</reference>
<reference evidence="16" key="5">
    <citation type="journal article" date="1999" name="J. Mol. Biol.">
        <title>Solution structure of an EGF module pair from the Plasmodium falciparum merozoite surface protein 1.</title>
        <authorList>
            <person name="Morgan W.D."/>
            <person name="Birdsall B."/>
            <person name="Frenkiel T.A."/>
            <person name="Gradwell M.G."/>
            <person name="Burghaus P.A."/>
            <person name="Syed S.E."/>
            <person name="Uthaipibull C."/>
            <person name="Holder A.A."/>
            <person name="Feeney J."/>
        </authorList>
    </citation>
    <scope>STRUCTURE BY NMR OF 1526-1621</scope>
    <scope>DISULFIDE BONDS</scope>
</reference>
<reference evidence="19" key="6">
    <citation type="journal article" date="2001" name="Angew. Chem. Int. Ed.">
        <title>Structure, Immunogenicity, and Protectivity Relationship for the 1585 Malarial Peptide and Its Substitution Analogues.</title>
        <authorList>
            <person name="Espejo F."/>
            <person name="Cubillos M."/>
            <person name="Salazar L.M."/>
            <person name="Guzman F."/>
            <person name="Urquiza M."/>
            <person name="Ocampo M."/>
            <person name="Silva Y."/>
            <person name="Rodriguez R."/>
            <person name="Lioy E."/>
            <person name="Patarroyo M.E."/>
        </authorList>
    </citation>
    <scope>STRUCTURE BY NMR OF 1282-1301</scope>
    <scope>PROTEOLYTIC CLEAVAGE</scope>
    <scope>BIOTECHNOLOGY</scope>
</reference>
<reference evidence="18" key="7">
    <citation type="journal article" date="2004" name="Biochem. Biophys. Res. Commun.">
        <title>Shortening and modifying the 1513 MSP-1 peptide's alpha-helical region induces protection against malaria.</title>
        <authorList>
            <person name="Espejo F."/>
            <person name="Bermudez A."/>
            <person name="Torres E."/>
            <person name="Urquiza M."/>
            <person name="Rodriguez R."/>
            <person name="Lopez Y."/>
            <person name="Patarroyo M.E."/>
        </authorList>
    </citation>
    <scope>STRUCTURE BY NMR OF 42-61</scope>
    <scope>PROTEOLYTIC CLEAVAGE</scope>
    <scope>BIOTECHNOLOGY</scope>
</reference>
<reference evidence="17" key="8">
    <citation type="journal article" date="2006" name="ChemBioChem">
        <title>Synthesis, solution structure and immune recognition of an epidermal growth factor-like domain from Plasmodium falciparum merozoite surface protein-1.</title>
        <authorList>
            <person name="James S."/>
            <person name="Moehle K."/>
            <person name="Renard A."/>
            <person name="Mueller M.S."/>
            <person name="Vogel D."/>
            <person name="Zurbriggen R."/>
            <person name="Pluschke G."/>
            <person name="Robinson J.A."/>
        </authorList>
    </citation>
    <scope>STRUCTURE BY NMR OF 1526-1573</scope>
    <scope>DISULFIDE BONDS</scope>
</reference>
<accession>P04933</accession>
<gene>
    <name evidence="2" type="primary">MSP1</name>
</gene>
<feature type="signal peptide" evidence="3">
    <location>
        <begin position="1"/>
        <end position="19"/>
    </location>
</feature>
<feature type="chain" id="PRO_0000024561" description="Merozoite surface protein 1" evidence="3">
    <location>
        <begin position="20"/>
        <end position="1613"/>
    </location>
</feature>
<feature type="chain" id="PRO_0000459290" description="p83 subunit" evidence="15">
    <location>
        <begin position="20"/>
        <end position="697"/>
    </location>
</feature>
<feature type="chain" id="PRO_0000459291" description="p30 subunit" evidence="15">
    <location>
        <begin position="698"/>
        <end position="910"/>
    </location>
</feature>
<feature type="chain" id="PRO_0000459292" description="p38 subunit" evidence="15">
    <location>
        <begin position="911"/>
        <end position="1263"/>
    </location>
</feature>
<feature type="chain" id="PRO_0000459293" description="p42 subunit" evidence="15">
    <location>
        <begin position="1264"/>
        <end position="1618"/>
    </location>
</feature>
<feature type="chain" id="PRO_0000459294" description="p33 subunit" evidence="15">
    <location>
        <begin position="1264"/>
        <end position="1525"/>
    </location>
</feature>
<feature type="chain" id="PRO_0000459295" description="p19 subunit" evidence="15">
    <location>
        <begin position="1526"/>
        <end position="1618"/>
    </location>
</feature>
<feature type="propeptide" id="PRO_0000459296" description="Removed in mature form" evidence="3">
    <location>
        <begin position="1619"/>
        <end position="1639"/>
    </location>
</feature>
<feature type="domain" description="EGF-like 1" evidence="5">
    <location>
        <begin position="1530"/>
        <end position="1570"/>
    </location>
</feature>
<feature type="domain" description="EGF-like 2" evidence="5">
    <location>
        <begin position="1571"/>
        <end position="1618"/>
    </location>
</feature>
<feature type="region of interest" description="Disordered" evidence="4">
    <location>
        <begin position="58"/>
        <end position="78"/>
    </location>
</feature>
<feature type="region of interest" description="Disordered" evidence="4">
    <location>
        <begin position="94"/>
        <end position="122"/>
    </location>
</feature>
<feature type="region of interest" description="Disordered" evidence="4">
    <location>
        <begin position="689"/>
        <end position="764"/>
    </location>
</feature>
<feature type="region of interest" description="Disordered" evidence="4">
    <location>
        <begin position="893"/>
        <end position="915"/>
    </location>
</feature>
<feature type="region of interest" description="Required for binding to host erythrocyte cell membrane" evidence="6">
    <location>
        <begin position="1002"/>
        <end position="1116"/>
    </location>
</feature>
<feature type="region of interest" description="Disordered" evidence="4">
    <location>
        <begin position="1199"/>
        <end position="1229"/>
    </location>
</feature>
<feature type="compositionally biased region" description="Polar residues" evidence="4">
    <location>
        <begin position="58"/>
        <end position="67"/>
    </location>
</feature>
<feature type="compositionally biased region" description="Polar residues" evidence="4">
    <location>
        <begin position="107"/>
        <end position="119"/>
    </location>
</feature>
<feature type="compositionally biased region" description="Polar residues" evidence="4">
    <location>
        <begin position="694"/>
        <end position="704"/>
    </location>
</feature>
<feature type="compositionally biased region" description="Polar residues" evidence="4">
    <location>
        <begin position="711"/>
        <end position="722"/>
    </location>
</feature>
<feature type="compositionally biased region" description="Low complexity" evidence="4">
    <location>
        <begin position="730"/>
        <end position="741"/>
    </location>
</feature>
<feature type="compositionally biased region" description="Polar residues" evidence="4">
    <location>
        <begin position="1199"/>
        <end position="1212"/>
    </location>
</feature>
<feature type="lipid moiety-binding region" description="GPI-anchor amidated serine" evidence="3">
    <location>
        <position position="1618"/>
    </location>
</feature>
<feature type="glycosylation site" description="N-linked (GlcNAc...) asparagine" evidence="3">
    <location>
        <position position="116"/>
    </location>
</feature>
<feature type="glycosylation site" description="N-linked (GlcNAc...) asparagine" evidence="3">
    <location>
        <position position="268"/>
    </location>
</feature>
<feature type="glycosylation site" description="N-linked (GlcNAc...) asparagine" evidence="3">
    <location>
        <position position="764"/>
    </location>
</feature>
<feature type="glycosylation site" description="N-linked (GlcNAc...) asparagine" evidence="3">
    <location>
        <position position="768"/>
    </location>
</feature>
<feature type="glycosylation site" description="N-linked (GlcNAc...) asparagine" evidence="3">
    <location>
        <position position="783"/>
    </location>
</feature>
<feature type="glycosylation site" description="N-linked (GlcNAc...) asparagine" evidence="3">
    <location>
        <position position="844"/>
    </location>
</feature>
<feature type="glycosylation site" description="N-linked (GlcNAc...) asparagine" evidence="3">
    <location>
        <position position="920"/>
    </location>
</feature>
<feature type="glycosylation site" description="N-linked (GlcNAc...) asparagine" evidence="3">
    <location>
        <position position="964"/>
    </location>
</feature>
<feature type="glycosylation site" description="N-linked (GlcNAc...) asparagine" evidence="3">
    <location>
        <position position="1058"/>
    </location>
</feature>
<feature type="glycosylation site" description="N-linked (GlcNAc...) asparagine" evidence="3">
    <location>
        <position position="1165"/>
    </location>
</feature>
<feature type="glycosylation site" description="N-linked (GlcNAc...) asparagine" evidence="3">
    <location>
        <position position="1174"/>
    </location>
</feature>
<feature type="glycosylation site" description="N-linked (GlcNAc...) asparagine" evidence="3">
    <location>
        <position position="1445"/>
    </location>
</feature>
<feature type="glycosylation site" description="N-linked (GlcNAc...) asparagine" evidence="3">
    <location>
        <position position="1526"/>
    </location>
</feature>
<feature type="disulfide bond" evidence="5 9 16 17">
    <location>
        <begin position="1532"/>
        <end position="1543"/>
    </location>
</feature>
<feature type="disulfide bond" evidence="5 9 16 17">
    <location>
        <begin position="1537"/>
        <end position="1553"/>
    </location>
</feature>
<feature type="disulfide bond" evidence="5 9 16 17">
    <location>
        <begin position="1555"/>
        <end position="1566"/>
    </location>
</feature>
<feature type="disulfide bond" evidence="5 16">
    <location>
        <begin position="1574"/>
        <end position="1587"/>
    </location>
</feature>
<feature type="disulfide bond" evidence="5 16">
    <location>
        <begin position="1581"/>
        <end position="1601"/>
    </location>
</feature>
<feature type="disulfide bond" evidence="5 16">
    <location>
        <begin position="1603"/>
        <end position="1617"/>
    </location>
</feature>
<feature type="helix" evidence="21">
    <location>
        <begin position="43"/>
        <end position="55"/>
    </location>
</feature>
<feature type="turn" evidence="21">
    <location>
        <begin position="56"/>
        <end position="59"/>
    </location>
</feature>
<feature type="turn" evidence="22">
    <location>
        <begin position="1283"/>
        <end position="1285"/>
    </location>
</feature>
<feature type="helix" evidence="22">
    <location>
        <begin position="1286"/>
        <end position="1296"/>
    </location>
</feature>
<feature type="turn" evidence="22">
    <location>
        <begin position="1297"/>
        <end position="1300"/>
    </location>
</feature>
<feature type="strand" evidence="20">
    <location>
        <begin position="1541"/>
        <end position="1546"/>
    </location>
</feature>
<feature type="turn" evidence="20">
    <location>
        <begin position="1547"/>
        <end position="1549"/>
    </location>
</feature>
<feature type="strand" evidence="20">
    <location>
        <begin position="1550"/>
        <end position="1555"/>
    </location>
</feature>
<feature type="strand" evidence="20">
    <location>
        <begin position="1559"/>
        <end position="1562"/>
    </location>
</feature>
<feature type="strand" evidence="20">
    <location>
        <begin position="1565"/>
        <end position="1568"/>
    </location>
</feature>
<feature type="turn" evidence="20">
    <location>
        <begin position="1575"/>
        <end position="1577"/>
    </location>
</feature>
<feature type="strand" evidence="20">
    <location>
        <begin position="1578"/>
        <end position="1581"/>
    </location>
</feature>
<feature type="strand" evidence="20">
    <location>
        <begin position="1585"/>
        <end position="1588"/>
    </location>
</feature>
<feature type="strand" evidence="20">
    <location>
        <begin position="1594"/>
        <end position="1596"/>
    </location>
</feature>
<feature type="strand" evidence="20">
    <location>
        <begin position="1600"/>
        <end position="1602"/>
    </location>
</feature>
<feature type="strand" evidence="20">
    <location>
        <begin position="1605"/>
        <end position="1607"/>
    </location>
</feature>
<feature type="strand" evidence="20">
    <location>
        <begin position="1611"/>
        <end position="1616"/>
    </location>
</feature>
<protein>
    <recommendedName>
        <fullName evidence="2">Merozoite surface protein 1</fullName>
    </recommendedName>
    <alternativeName>
        <fullName evidence="14">Merozoite surface antigen</fullName>
    </alternativeName>
    <alternativeName>
        <fullName evidence="1">PMMSA</fullName>
    </alternativeName>
    <alternativeName>
        <fullName evidence="14">p195</fullName>
    </alternativeName>
    <component>
        <recommendedName>
            <fullName evidence="14">p83 subunit</fullName>
        </recommendedName>
    </component>
    <component>
        <recommendedName>
            <fullName evidence="14">p30 subunit</fullName>
        </recommendedName>
    </component>
    <component>
        <recommendedName>
            <fullName evidence="12">p38 subunit</fullName>
        </recommendedName>
    </component>
    <component>
        <recommendedName>
            <fullName evidence="14">p42 subunit</fullName>
        </recommendedName>
    </component>
    <component>
        <recommendedName>
            <fullName evidence="13">p33 subunit</fullName>
        </recommendedName>
    </component>
    <component>
        <recommendedName>
            <fullName evidence="14">p19 subunit</fullName>
        </recommendedName>
    </component>
</protein>
<name>MSP1_PLAFW</name>
<evidence type="ECO:0000250" key="1">
    <source>
        <dbReference type="UniProtKB" id="P13819"/>
    </source>
</evidence>
<evidence type="ECO:0000250" key="2">
    <source>
        <dbReference type="UniProtKB" id="Q8I0U8"/>
    </source>
</evidence>
<evidence type="ECO:0000255" key="3"/>
<evidence type="ECO:0000256" key="4">
    <source>
        <dbReference type="SAM" id="MobiDB-lite"/>
    </source>
</evidence>
<evidence type="ECO:0000269" key="5">
    <source>
    </source>
</evidence>
<evidence type="ECO:0000269" key="6">
    <source>
    </source>
</evidence>
<evidence type="ECO:0000269" key="7">
    <source>
    </source>
</evidence>
<evidence type="ECO:0000269" key="8">
    <source>
    </source>
</evidence>
<evidence type="ECO:0000269" key="9">
    <source>
    </source>
</evidence>
<evidence type="ECO:0000269" key="10">
    <source>
    </source>
</evidence>
<evidence type="ECO:0000269" key="11">
    <source>
    </source>
</evidence>
<evidence type="ECO:0000303" key="12">
    <source>
    </source>
</evidence>
<evidence type="ECO:0000303" key="13">
    <source>
    </source>
</evidence>
<evidence type="ECO:0000303" key="14">
    <source>
    </source>
</evidence>
<evidence type="ECO:0000305" key="15">
    <source>
    </source>
</evidence>
<evidence type="ECO:0007744" key="16">
    <source>
        <dbReference type="PDB" id="1CEJ"/>
    </source>
</evidence>
<evidence type="ECO:0007744" key="17">
    <source>
        <dbReference type="PDB" id="2FLG"/>
    </source>
</evidence>
<evidence type="ECO:0007744" key="18">
    <source>
        <dbReference type="PDB" id="2MU7"/>
    </source>
</evidence>
<evidence type="ECO:0007744" key="19">
    <source>
        <dbReference type="PDB" id="2MUE"/>
    </source>
</evidence>
<evidence type="ECO:0007829" key="20">
    <source>
        <dbReference type="PDB" id="1CEJ"/>
    </source>
</evidence>
<evidence type="ECO:0007829" key="21">
    <source>
        <dbReference type="PDB" id="2MU7"/>
    </source>
</evidence>
<evidence type="ECO:0007829" key="22">
    <source>
        <dbReference type="PDB" id="2MUE"/>
    </source>
</evidence>
<dbReference type="EMBL" id="X02919">
    <property type="protein sequence ID" value="CAA26676.1"/>
    <property type="molecule type" value="mRNA"/>
</dbReference>
<dbReference type="PIR" id="A24594">
    <property type="entry name" value="A24594"/>
</dbReference>
<dbReference type="PIR" id="S05603">
    <property type="entry name" value="S05603"/>
</dbReference>
<dbReference type="PDB" id="1CEJ">
    <property type="method" value="NMR"/>
    <property type="chains" value="A=1526-1621"/>
</dbReference>
<dbReference type="PDB" id="2FLG">
    <property type="method" value="NMR"/>
    <property type="chains" value="A=1526-1573"/>
</dbReference>
<dbReference type="PDB" id="2MU7">
    <property type="method" value="NMR"/>
    <property type="chains" value="A=42-61"/>
</dbReference>
<dbReference type="PDB" id="2MUE">
    <property type="method" value="NMR"/>
    <property type="chains" value="A=1282-1301"/>
</dbReference>
<dbReference type="PDBsum" id="1CEJ"/>
<dbReference type="PDBsum" id="2FLG"/>
<dbReference type="PDBsum" id="2MU7"/>
<dbReference type="PDBsum" id="2MUE"/>
<dbReference type="BMRB" id="P04933"/>
<dbReference type="SMR" id="P04933"/>
<dbReference type="GlyCosmos" id="P04933">
    <property type="glycosylation" value="13 sites, No reported glycans"/>
</dbReference>
<dbReference type="ABCD" id="P04933">
    <property type="antibodies" value="14 sequenced antibodies"/>
</dbReference>
<dbReference type="EvolutionaryTrace" id="P04933"/>
<dbReference type="GO" id="GO:0005576">
    <property type="term" value="C:extracellular region"/>
    <property type="evidence" value="ECO:0007669"/>
    <property type="project" value="UniProtKB-SubCell"/>
</dbReference>
<dbReference type="GO" id="GO:0005886">
    <property type="term" value="C:plasma membrane"/>
    <property type="evidence" value="ECO:0007669"/>
    <property type="project" value="UniProtKB-SubCell"/>
</dbReference>
<dbReference type="GO" id="GO:0098552">
    <property type="term" value="C:side of membrane"/>
    <property type="evidence" value="ECO:0007669"/>
    <property type="project" value="UniProtKB-KW"/>
</dbReference>
<dbReference type="GO" id="GO:0005774">
    <property type="term" value="C:vacuolar membrane"/>
    <property type="evidence" value="ECO:0007669"/>
    <property type="project" value="UniProtKB-SubCell"/>
</dbReference>
<dbReference type="Gene3D" id="2.10.25.10">
    <property type="entry name" value="Laminin"/>
    <property type="match status" value="2"/>
</dbReference>
<dbReference type="InterPro" id="IPR010901">
    <property type="entry name" value="MSP1_C"/>
</dbReference>
<dbReference type="InterPro" id="IPR024730">
    <property type="entry name" value="MSP1_EGF_1"/>
</dbReference>
<dbReference type="Pfam" id="PF12946">
    <property type="entry name" value="EGF_MSP1_1"/>
    <property type="match status" value="1"/>
</dbReference>
<dbReference type="Pfam" id="PF07462">
    <property type="entry name" value="MSP1_C"/>
    <property type="match status" value="1"/>
</dbReference>
<dbReference type="SUPFAM" id="SSF57196">
    <property type="entry name" value="EGF/Laminin"/>
    <property type="match status" value="2"/>
</dbReference>
<proteinExistence type="evidence at protein level"/>
<organism>
    <name type="scientific">Plasmodium falciparum (isolate Wellcome)</name>
    <dbReference type="NCBI Taxonomy" id="5848"/>
    <lineage>
        <taxon>Eukaryota</taxon>
        <taxon>Sar</taxon>
        <taxon>Alveolata</taxon>
        <taxon>Apicomplexa</taxon>
        <taxon>Aconoidasida</taxon>
        <taxon>Haemosporida</taxon>
        <taxon>Plasmodiidae</taxon>
        <taxon>Plasmodium</taxon>
        <taxon>Plasmodium (Laverania)</taxon>
    </lineage>
</organism>
<sequence>MKIIFFLCSFLFFIINTQCVTHESYQELVKKLEALEDAVLTGYSLFQKEKMVLNEGTSGTAVTTSTPGSKGSVASGGSGGSVASGGSVASGGSVASGGSVASGGSGNSRRTNPSDNSSDSDAKSYADLKHRVRNYLLTIKELKYPQLFDLTNHMLTLCDNIHGFKYLIDGYEEINELLYKLNFYFDLLRAKLNDVCANDYCQIPFNLKIRANELDVLKKLVFGYRKPLDNIKDNVGKMEDYIKKNKKTIENINELIEESKKTIDKNKNATKEEEKKKLYQAQYDLSIYNKQLEEAHNLISVLEKRIDTLKKNENIKELLDKINEIKNPPPANSGNTPNTLLDKNKKIEEHEKEIKEIAKTIKFNIDSLFTDPLELEYYLREKNKNIDISAKVETKESTEPNEYPNGVTYPLSYNDINNALNELNSFGDLINPFDYTKEPSKNIYTDNERKKFINEIKEKIKIEKKKIESDKKSYEDRSKSLNDITKEYEKLLNEIYDSKFNNNIDLTNFEKMMGKRYSYKVEKLTHHNTFASYENSKHNLEKLTKALKYMEDYSLRNIVVEKELKYYKNLISKIENEIETLVENIKKDEEQLFEKKITKDENKPDEKILEVSDIVKVQVQKVLLMNKIDELKKTQLILKNVELKHNIHVPNSYKQENKQEPYYLIVLKKEIDKLKVFMPKVESLINEEKKNIKTEGQSDNSEPSTEGEITGQATTKPGQQAGSALEGDSVQAQAQEQKQAQPPVPVPVPEAKAQVPTPPAPVNNKTENVSKLDYLEKLYEFLNTSYICHKYILVSHSTMNEKILKQYKITKEEESKLSSCDPLDLLFNIQNNIPVMYSMFDSLNNSLSQLFMEIYEKEMVCNLYKLKDNDKIKNLLEEAKKVSTSVKTLSSSSMQPLSLTPQDKPEVSANDDTSHSTNLNNSLKLFENILSLGKNKNIYQELIGQKSSENFYEKILKDSDTFYNESFTNFVKSKADDINSLNDESKRKKLEEDINKLKKTLQLSFDLYNKYKLKLERLFDKKKTVGKYKMQIKKLTLLKEQLESKLNSLNNPKHVLQNFSVFFNKKKEAEIAETENTLENTKILLKHYKGLVKYYNGESSPLKTLSEESIQTEDNYASLENFKVLSKLEGKLKDNLNLEKKKLSYLSSGLHHLIAELKEVIKNKNYTGNSPSENNTDVNNALESYKKFLPEGTDVATVVSESGSDTLEQSQPKKPASTHVGAESNTITTSQNVDDEVDDVIIVPIFGESEEDYDDLGQVVTGEAVTPSVIDNILSKIENEYEVLYLKPLAGVYRSLKKQLENNVMTFNVNVKDILNSRFNKRENFKNVLESDLIPYKDLTSSNYVVKDPYKFLNKEKRDKFLSSYNYIKDSIDTDINFANDVLGYYKILSEKYKSDLDSIKKYINDKQGENEKYLPFLNNIETLYKTVNDKIDLFVIHLEAKVLNYTYEKSNVEVKIKELNYLKTIQDKLADFKKNNNFVGIADLSTDYNHNNLLTKFLSTGMVFENLAKTVLSNLLDGNLQGMLNISQHQCVKKQCPQNSGCFRHLDEREECKCLLNYKQEGDKCVENPNPTCNENNGGCDADAKCTEEDSGSNGKKITCECTKPDSYPLFDGIFCSSSNFLGISFLLILMLILYSFI</sequence>
<comment type="function">
    <text evidence="2 6">During the asexual blood stage, involved in merozoite egress from host erythrocytes possibly via its interaction with the host cytoskeleton protein spectrin resulting in the destabilization of the host cytoskeleton and thus leading to erythrocyte cell membrane rupture (By similarity). Involved in the binding to host erythrocytes and is required for host erythrocyte invasion (PubMed:10802320).</text>
</comment>
<comment type="function">
    <molecule>p33 subunit</molecule>
    <text evidence="2">By binding to host proinflammatory cytokine S100P may interfere with host immune responses.</text>
</comment>
<comment type="function">
    <molecule>p19 subunit</molecule>
    <text evidence="2">Involved in merozoite invasion of host erythrocytes (By similarity). May play a role in the biogenesis and/or function of the food vacuole during the intraerythrocytic development (By similarity).</text>
</comment>
<comment type="subunit">
    <text evidence="2">Forms a complex composed of subunits p83, p30, p38, and p42 which remain non-covalently associated; the complex is formed at the merozoite surface prior to egress from host erythrocytes. Forms a complex composed of processed MSP1 subunits, MSP6 subunit p36 and MSP7; the complex is formed at the merozoite surface prior to egress from host erythrocytes. Within the complex, interacts (via subunit p38) with MSP6 subunit p36 and (via subunits p83, p30 and p38) with MSP7 (via subunit p22). Forms a complex composed of MSP1, MSP6, DBLMSP1 and DBLMSP2. Within the complex, interacts (via subunit p38) with DBLMSP1 and DBLMSP2. Forms a complex composed of MSP1, and rhoptry proteins RhopH3, RAP1 and CLAG9/RhopH3. Within the complex, interacts (via subunits p42 and p19) with RhopH3 (via C-terminus). Forms a complex composed of MSP1, MSP6, MSP7, MSP9 and MSP3; within the complex, MSP6 and MSP9 mediate the binding to the host erythrocyte. Interacts (via subunits p19 and p42) with MSP9; the interaction is direct; MSP1 subunits p19 or p42, and MSP9 form a co-ligand complex that interacts with host SLC4A1/Band 3 protein. May interact with PFD6. Interacts with host spectrin.</text>
</comment>
<comment type="subunit">
    <molecule>p83 subunit</molecule>
    <text evidence="2">Interacts with host glycophorin GYPA in a sialic acid-independent manner.</text>
</comment>
<comment type="subunit">
    <molecule>p33 subunit</molecule>
    <text evidence="2">Interacts with host proinflammatory cytokine S100P; the interaction blocks S100P inflammatory and chemotactic activities.</text>
</comment>
<comment type="subunit">
    <molecule>p42 subunit</molecule>
    <text evidence="2">Interacts with host SLC4A1/Band 3 (via 5ABC region) on the host erythrocyte surface in a sialic acid-independent manner.</text>
</comment>
<comment type="subcellular location">
    <subcellularLocation>
        <location evidence="10">Cell membrane</location>
        <topology evidence="3">Lipid-anchor</topology>
        <topology evidence="3">GPI-anchor</topology>
    </subcellularLocation>
    <subcellularLocation>
        <location evidence="11">Secreted</location>
    </subcellularLocation>
</comment>
<comment type="subcellular location">
    <molecule>p19 subunit</molecule>
    <subcellularLocation>
        <location evidence="2">Cell membrane</location>
        <topology evidence="3">Lipid-anchor</topology>
        <topology evidence="3">GPI-anchor</topology>
    </subcellularLocation>
    <subcellularLocation>
        <location evidence="2">Vacuole membrane</location>
        <topology evidence="3">Lipid-anchor</topology>
        <topology evidence="3">GPI-anchor</topology>
    </subcellularLocation>
    <text evidence="2">In free merozoites, localizes to the cell membrane (By similarity). Following merozoite invasion of host erythrocytes, p19 subunit is endocytosed into small food vacuoles in the ring stage and persists throughout the subsequent intra-erythrocytic stages at the surface of the food vacuole where it forms clusters (By similarity).</text>
</comment>
<comment type="developmental stage">
    <text evidence="10 11">Expressed during the asexual blood stage (at protein level).</text>
</comment>
<comment type="PTM">
    <text evidence="2 7 8 10 11">The p190 precursor is cleaved by SUB1 prior to merozoite egress into 4 subunits p83, p30, p38, and p42 which remain non-covalently associated (PubMed:12404375, PubMed:14766224, PubMed:20735778, PubMed:2995820). SUB1-mediated proteolytic cleavage occurs in an orderly manner; the first cleavage occurs at the p83/p30 site, followed by cleavage at the p30/p38 site, the last cleavage occurs at the p38/p42 site (PubMed:20735778). The order of cleavage is essential for parasite viability (PubMed:20735778). SUB1-mediated processing is essential for merozoite egress (By similarity). In a second processing step during erythrocyte invasion, p42 is cleaved by SUB2 into p33 and p19; the latter remains attached to the merozoite surface via its GPI-anchor and stays on the surface during the subsequent ring stage (PubMed:20735778).</text>
</comment>
<comment type="polymorphism">
    <text evidence="10">The sequence varies across Plasmodium strains (PubMed:20735778). There are two major dimorphic forms of MSP1, typified by those expressed by the 3D7 and Wellcome P.falciparum isolates (PubMed:20735778).</text>
</comment>
<comment type="biotechnology">
    <text evidence="6 7 8">Potential candidate for the development of parasite blood stage vaccines (PubMed:12404375, PubMed:14766224). In vitro, antibodies against MSP1 are capable of inhibiting parasite growth in host erythrocytes (PubMed:10802320).</text>
</comment>
<keyword id="KW-0002">3D-structure</keyword>
<keyword id="KW-1003">Cell membrane</keyword>
<keyword id="KW-1015">Disulfide bond</keyword>
<keyword id="KW-0245">EGF-like domain</keyword>
<keyword id="KW-0325">Glycoprotein</keyword>
<keyword id="KW-0336">GPI-anchor</keyword>
<keyword id="KW-0449">Lipoprotein</keyword>
<keyword id="KW-0461">Malaria</keyword>
<keyword id="KW-0472">Membrane</keyword>
<keyword id="KW-0477">Merozoite</keyword>
<keyword id="KW-0677">Repeat</keyword>
<keyword id="KW-0964">Secreted</keyword>
<keyword id="KW-0732">Signal</keyword>
<keyword id="KW-0926">Vacuole</keyword>